<feature type="signal peptide" evidence="2 4 5 6">
    <location>
        <begin position="1"/>
        <end position="20"/>
    </location>
</feature>
<feature type="chain" id="PRO_0000025815" description="Protease 7">
    <location>
        <begin position="21"/>
        <end position="317"/>
    </location>
</feature>
<feature type="topological domain" description="Periplasmic" evidence="1">
    <location>
        <begin position="21"/>
        <end position="31"/>
    </location>
</feature>
<feature type="transmembrane region" description="Beta stranded" evidence="1">
    <location>
        <begin position="32"/>
        <end position="41"/>
    </location>
</feature>
<feature type="topological domain" description="Extracellular" evidence="1">
    <location>
        <begin position="42"/>
        <end position="69"/>
    </location>
</feature>
<feature type="transmembrane region" description="Beta stranded" evidence="1">
    <location>
        <begin position="70"/>
        <end position="78"/>
    </location>
</feature>
<feature type="topological domain" description="Periplasmic" evidence="1">
    <location>
        <begin position="79"/>
        <end position="83"/>
    </location>
</feature>
<feature type="transmembrane region" description="Beta stranded" evidence="1">
    <location>
        <begin position="84"/>
        <end position="92"/>
    </location>
</feature>
<feature type="topological domain" description="Extracellular" evidence="1">
    <location>
        <begin position="93"/>
        <end position="130"/>
    </location>
</feature>
<feature type="transmembrane region" description="Beta stranded" evidence="1">
    <location>
        <begin position="131"/>
        <end position="140"/>
    </location>
</feature>
<feature type="topological domain" description="Periplasmic" evidence="1">
    <location>
        <begin position="141"/>
        <end position="145"/>
    </location>
</feature>
<feature type="transmembrane region" description="Beta stranded" evidence="1">
    <location>
        <begin position="146"/>
        <end position="156"/>
    </location>
</feature>
<feature type="topological domain" description="Extracellular" evidence="1">
    <location>
        <begin position="157"/>
        <end position="197"/>
    </location>
</feature>
<feature type="transmembrane region" description="Beta stranded" evidence="1">
    <location>
        <begin position="198"/>
        <end position="209"/>
    </location>
</feature>
<feature type="topological domain" description="Periplasmic" evidence="1">
    <location>
        <begin position="210"/>
        <end position="211"/>
    </location>
</feature>
<feature type="transmembrane region" description="Beta stranded" evidence="1">
    <location>
        <begin position="212"/>
        <end position="221"/>
    </location>
</feature>
<feature type="topological domain" description="Extracellular" evidence="1">
    <location>
        <begin position="222"/>
        <end position="250"/>
    </location>
</feature>
<feature type="transmembrane region" description="Beta stranded" evidence="1">
    <location>
        <begin position="251"/>
        <end position="261"/>
    </location>
</feature>
<feature type="topological domain" description="Periplasmic" evidence="1">
    <location>
        <begin position="262"/>
        <end position="264"/>
    </location>
</feature>
<feature type="transmembrane region" description="Beta stranded" evidence="1">
    <location>
        <begin position="265"/>
        <end position="274"/>
    </location>
</feature>
<feature type="topological domain" description="Extracellular" evidence="1">
    <location>
        <begin position="275"/>
        <end position="306"/>
    </location>
</feature>
<feature type="transmembrane region" description="Beta stranded" evidence="1">
    <location>
        <begin position="307"/>
        <end position="316"/>
    </location>
</feature>
<feature type="topological domain" description="Periplasmic" evidence="1">
    <location>
        <position position="317"/>
    </location>
</feature>
<feature type="active site" evidence="9">
    <location>
        <position position="103"/>
    </location>
</feature>
<feature type="active site" evidence="9">
    <location>
        <position position="105"/>
    </location>
</feature>
<feature type="active site" evidence="9">
    <location>
        <position position="230"/>
    </location>
</feature>
<feature type="active site" evidence="9">
    <location>
        <position position="232"/>
    </location>
</feature>
<feature type="mutagenesis site" description="Loss of activity." evidence="3">
    <original>D</original>
    <variation>A</variation>
    <location>
        <position position="103"/>
    </location>
</feature>
<feature type="mutagenesis site" description="Loss of activity." evidence="3">
    <original>D</original>
    <variation>A</variation>
    <location>
        <position position="105"/>
    </location>
</feature>
<feature type="mutagenesis site" description="Loss of activity." evidence="3">
    <original>D</original>
    <variation>A</variation>
    <location>
        <position position="230"/>
    </location>
</feature>
<feature type="mutagenesis site" description="70% of wild-type enzymatic activity.">
    <original>GK</original>
    <variation>KG</variation>
    <location>
        <begin position="236"/>
        <end position="237"/>
    </location>
</feature>
<feature type="mutagenesis site" description="40% of wild-type enzymatic activity." evidence="2">
    <original>K</original>
    <variation>T</variation>
    <location>
        <position position="237"/>
    </location>
</feature>
<feature type="mutagenesis site" description="Loss of activity.">
    <original>R</original>
    <variation>L</variation>
    <location>
        <position position="238"/>
    </location>
</feature>
<feature type="strand" evidence="10">
    <location>
        <begin position="32"/>
        <end position="51"/>
    </location>
</feature>
<feature type="turn" evidence="10">
    <location>
        <begin position="52"/>
        <end position="56"/>
    </location>
</feature>
<feature type="strand" evidence="10">
    <location>
        <begin position="57"/>
        <end position="78"/>
    </location>
</feature>
<feature type="strand" evidence="10">
    <location>
        <begin position="81"/>
        <end position="95"/>
    </location>
</feature>
<feature type="strand" evidence="10">
    <location>
        <begin position="97"/>
        <end position="105"/>
    </location>
</feature>
<feature type="strand" evidence="10">
    <location>
        <begin position="116"/>
        <end position="142"/>
    </location>
</feature>
<feature type="strand" evidence="10">
    <location>
        <begin position="144"/>
        <end position="164"/>
    </location>
</feature>
<feature type="strand" evidence="10">
    <location>
        <begin position="167"/>
        <end position="170"/>
    </location>
</feature>
<feature type="strand" evidence="10">
    <location>
        <begin position="188"/>
        <end position="209"/>
    </location>
</feature>
<feature type="strand" evidence="10">
    <location>
        <begin position="212"/>
        <end position="233"/>
    </location>
</feature>
<feature type="strand" evidence="10">
    <location>
        <begin position="235"/>
        <end position="237"/>
    </location>
</feature>
<feature type="strand" evidence="10">
    <location>
        <begin position="239"/>
        <end position="262"/>
    </location>
</feature>
<feature type="strand" evidence="10">
    <location>
        <begin position="265"/>
        <end position="287"/>
    </location>
</feature>
<feature type="turn" evidence="10">
    <location>
        <begin position="288"/>
        <end position="291"/>
    </location>
</feature>
<feature type="strand" evidence="10">
    <location>
        <begin position="292"/>
        <end position="316"/>
    </location>
</feature>
<proteinExistence type="evidence at protein level"/>
<dbReference type="EC" id="3.4.23.49"/>
<dbReference type="EMBL" id="X06903">
    <property type="protein sequence ID" value="CAA30008.1"/>
    <property type="molecule type" value="Genomic_DNA"/>
</dbReference>
<dbReference type="EMBL" id="M23630">
    <property type="protein sequence ID" value="AAA24430.1"/>
    <property type="molecule type" value="Genomic_DNA"/>
</dbReference>
<dbReference type="EMBL" id="U82598">
    <property type="protein sequence ID" value="AAB40761.1"/>
    <property type="molecule type" value="Genomic_DNA"/>
</dbReference>
<dbReference type="EMBL" id="U00096">
    <property type="protein sequence ID" value="AAC73666.1"/>
    <property type="molecule type" value="Genomic_DNA"/>
</dbReference>
<dbReference type="EMBL" id="AP009048">
    <property type="protein sequence ID" value="BAA35199.2"/>
    <property type="molecule type" value="Genomic_DNA"/>
</dbReference>
<dbReference type="PIR" id="A31387">
    <property type="entry name" value="A31387"/>
</dbReference>
<dbReference type="RefSeq" id="NP_415097.1">
    <property type="nucleotide sequence ID" value="NC_000913.3"/>
</dbReference>
<dbReference type="RefSeq" id="WP_001201845.1">
    <property type="nucleotide sequence ID" value="NZ_LN832404.1"/>
</dbReference>
<dbReference type="PDB" id="1I78">
    <property type="method" value="X-ray"/>
    <property type="resolution" value="2.60 A"/>
    <property type="chains" value="A/B=21-317"/>
</dbReference>
<dbReference type="PDBsum" id="1I78"/>
<dbReference type="SMR" id="P09169"/>
<dbReference type="BioGRID" id="4263520">
    <property type="interactions" value="171"/>
</dbReference>
<dbReference type="FunCoup" id="P09169">
    <property type="interactions" value="13"/>
</dbReference>
<dbReference type="STRING" id="511145.b0565"/>
<dbReference type="MEROPS" id="A26.001"/>
<dbReference type="MoonProt" id="P09169"/>
<dbReference type="TCDB" id="9.B.50.1.1">
    <property type="family name" value="the outer membrane beta-barrel endoprotease, omptin (omptin) family"/>
</dbReference>
<dbReference type="jPOST" id="P09169"/>
<dbReference type="PaxDb" id="511145-b0565"/>
<dbReference type="EnsemblBacteria" id="AAC73666">
    <property type="protein sequence ID" value="AAC73666"/>
    <property type="gene ID" value="b0565"/>
</dbReference>
<dbReference type="GeneID" id="945185"/>
<dbReference type="KEGG" id="ecj:JW0554"/>
<dbReference type="KEGG" id="eco:b0565"/>
<dbReference type="KEGG" id="ecoc:C3026_02800"/>
<dbReference type="PATRIC" id="fig|1411691.4.peg.1709"/>
<dbReference type="EchoBASE" id="EB0667"/>
<dbReference type="eggNOG" id="COG4571">
    <property type="taxonomic scope" value="Bacteria"/>
</dbReference>
<dbReference type="HOGENOM" id="CLU_063041_1_0_6"/>
<dbReference type="InParanoid" id="P09169"/>
<dbReference type="OMA" id="HENFEFG"/>
<dbReference type="OrthoDB" id="2112810at2"/>
<dbReference type="PhylomeDB" id="P09169"/>
<dbReference type="BioCyc" id="EcoCyc:EG10673-MONOMER"/>
<dbReference type="BioCyc" id="MetaCyc:EG10673-MONOMER"/>
<dbReference type="BRENDA" id="3.4.23.49">
    <property type="organism ID" value="2026"/>
</dbReference>
<dbReference type="EvolutionaryTrace" id="P09169"/>
<dbReference type="PRO" id="PR:P09169"/>
<dbReference type="Proteomes" id="UP000000625">
    <property type="component" value="Chromosome"/>
</dbReference>
<dbReference type="GO" id="GO:0009279">
    <property type="term" value="C:cell outer membrane"/>
    <property type="evidence" value="ECO:0000314"/>
    <property type="project" value="EcoCyc"/>
</dbReference>
<dbReference type="GO" id="GO:0004190">
    <property type="term" value="F:aspartic-type endopeptidase activity"/>
    <property type="evidence" value="ECO:0007669"/>
    <property type="project" value="UniProtKB-KW"/>
</dbReference>
<dbReference type="GO" id="GO:0004175">
    <property type="term" value="F:endopeptidase activity"/>
    <property type="evidence" value="ECO:0000315"/>
    <property type="project" value="EcoliWiki"/>
</dbReference>
<dbReference type="GO" id="GO:0004252">
    <property type="term" value="F:serine-type endopeptidase activity"/>
    <property type="evidence" value="ECO:0000315"/>
    <property type="project" value="EcoliWiki"/>
</dbReference>
<dbReference type="GO" id="GO:0006508">
    <property type="term" value="P:proteolysis"/>
    <property type="evidence" value="ECO:0000315"/>
    <property type="project" value="EcoliWiki"/>
</dbReference>
<dbReference type="Gene3D" id="2.40.128.90">
    <property type="entry name" value="OMPT-like"/>
    <property type="match status" value="1"/>
</dbReference>
<dbReference type="InterPro" id="IPR020080">
    <property type="entry name" value="OM_adhesin/peptidase_omptin"/>
</dbReference>
<dbReference type="InterPro" id="IPR053724">
    <property type="entry name" value="OMP_A26_sf"/>
</dbReference>
<dbReference type="InterPro" id="IPR020079">
    <property type="entry name" value="Peptidase_A26_CS"/>
</dbReference>
<dbReference type="InterPro" id="IPR000036">
    <property type="entry name" value="Peptidase_A26_omptin"/>
</dbReference>
<dbReference type="NCBIfam" id="NF008222">
    <property type="entry name" value="PRK10993.1-1"/>
    <property type="match status" value="1"/>
</dbReference>
<dbReference type="NCBIfam" id="NF008224">
    <property type="entry name" value="PRK10993.1-4"/>
    <property type="match status" value="1"/>
</dbReference>
<dbReference type="Pfam" id="PF01278">
    <property type="entry name" value="Omptin"/>
    <property type="match status" value="1"/>
</dbReference>
<dbReference type="PIRSF" id="PIRSF001522">
    <property type="entry name" value="Peptidase_A26"/>
    <property type="match status" value="1"/>
</dbReference>
<dbReference type="PRINTS" id="PR00482">
    <property type="entry name" value="OMPTIN"/>
</dbReference>
<dbReference type="SUPFAM" id="SSF69917">
    <property type="entry name" value="OMPT-like"/>
    <property type="match status" value="1"/>
</dbReference>
<dbReference type="PROSITE" id="PS00834">
    <property type="entry name" value="OMPTIN_1"/>
    <property type="match status" value="1"/>
</dbReference>
<dbReference type="PROSITE" id="PS00835">
    <property type="entry name" value="OMPTIN_2"/>
    <property type="match status" value="1"/>
</dbReference>
<organism>
    <name type="scientific">Escherichia coli (strain K12)</name>
    <dbReference type="NCBI Taxonomy" id="83333"/>
    <lineage>
        <taxon>Bacteria</taxon>
        <taxon>Pseudomonadati</taxon>
        <taxon>Pseudomonadota</taxon>
        <taxon>Gammaproteobacteria</taxon>
        <taxon>Enterobacterales</taxon>
        <taxon>Enterobacteriaceae</taxon>
        <taxon>Escherichia</taxon>
    </lineage>
</organism>
<gene>
    <name type="primary">ompT</name>
    <name type="ordered locus">b0565</name>
    <name type="ordered locus">JW0554</name>
</gene>
<sequence>MRAKLLGIVLTTPIAISSFASTETLSFTPDNINADISLGTLSGKTKERVYLAEEGGRKVSQLDWKFNNAAIIKGAINWDLMPQISIGAAGWTTLGSRGGNMVDQDWMDSSNPGTWTDESRHPDTQLNYANEFDLNIKGWLLNEPNYRLGLMAGYQESRYSFTARGGSYIYSSEEGFRDDIGSFPNGERAIGYKQRFKMPYIGLTGSYRYEDFELGGTFKYSGWVESSDNDEHYDPGKRITYRSKVKDQNYYSVAVNAGYYVTPNAKVYVEGAWNRVTNKKGNTSLYDHNNNTSDYSKNGAGIENYNFITTAGLKYTF</sequence>
<keyword id="KW-0002">3D-structure</keyword>
<keyword id="KW-0064">Aspartyl protease</keyword>
<keyword id="KW-0998">Cell outer membrane</keyword>
<keyword id="KW-0903">Direct protein sequencing</keyword>
<keyword id="KW-0378">Hydrolase</keyword>
<keyword id="KW-0472">Membrane</keyword>
<keyword id="KW-0645">Protease</keyword>
<keyword id="KW-1185">Reference proteome</keyword>
<keyword id="KW-0732">Signal</keyword>
<keyword id="KW-0812">Transmembrane</keyword>
<keyword id="KW-1134">Transmembrane beta strand</keyword>
<reference key="1">
    <citation type="journal article" date="1988" name="Nucleic Acids Res.">
        <title>Complete nucleotide sequence and deduced amino acid sequence of the ompT gene of Escherichia coli K-12.</title>
        <authorList>
            <person name="Grodberg J."/>
            <person name="Lundrigan M.D."/>
            <person name="Toledo D.L."/>
            <person name="Mangel W.F."/>
            <person name="Dunn J.J."/>
        </authorList>
    </citation>
    <scope>NUCLEOTIDE SEQUENCE [GENOMIC DNA]</scope>
    <scope>PROTEIN SEQUENCE OF 21-36</scope>
    <source>
        <strain>K12</strain>
    </source>
</reference>
<reference key="2">
    <citation type="journal article" date="1988" name="J. Bacteriol.">
        <title>Purification, characterization, and primary structure of Escherichia coli protease VII with specificity for paired basic residues: identity of protease VII and OmpT.</title>
        <authorList>
            <person name="Sugimura K."/>
            <person name="Nisihihara T."/>
        </authorList>
    </citation>
    <scope>NUCLEOTIDE SEQUENCE [GENOMIC DNA]</scope>
    <scope>PROTEIN SEQUENCE OF 21-40</scope>
    <scope>CHARACTERIZATION</scope>
</reference>
<reference key="3">
    <citation type="submission" date="1997-01" db="EMBL/GenBank/DDBJ databases">
        <title>Sequence of minutes 4-25 of Escherichia coli.</title>
        <authorList>
            <person name="Chung E."/>
            <person name="Allen E."/>
            <person name="Araujo R."/>
            <person name="Aparicio A.M."/>
            <person name="Davis K."/>
            <person name="Duncan M."/>
            <person name="Federspiel N."/>
            <person name="Hyman R."/>
            <person name="Kalman S."/>
            <person name="Komp C."/>
            <person name="Kurdi O."/>
            <person name="Lew H."/>
            <person name="Lin D."/>
            <person name="Namath A."/>
            <person name="Oefner P."/>
            <person name="Roberts D."/>
            <person name="Schramm S."/>
            <person name="Davis R.W."/>
        </authorList>
    </citation>
    <scope>NUCLEOTIDE SEQUENCE [LARGE SCALE GENOMIC DNA]</scope>
    <source>
        <strain>K12 / MG1655 / ATCC 47076</strain>
    </source>
</reference>
<reference key="4">
    <citation type="journal article" date="1997" name="Science">
        <title>The complete genome sequence of Escherichia coli K-12.</title>
        <authorList>
            <person name="Blattner F.R."/>
            <person name="Plunkett G. III"/>
            <person name="Bloch C.A."/>
            <person name="Perna N.T."/>
            <person name="Burland V."/>
            <person name="Riley M."/>
            <person name="Collado-Vides J."/>
            <person name="Glasner J.D."/>
            <person name="Rode C.K."/>
            <person name="Mayhew G.F."/>
            <person name="Gregor J."/>
            <person name="Davis N.W."/>
            <person name="Kirkpatrick H.A."/>
            <person name="Goeden M.A."/>
            <person name="Rose D.J."/>
            <person name="Mau B."/>
            <person name="Shao Y."/>
        </authorList>
    </citation>
    <scope>NUCLEOTIDE SEQUENCE [LARGE SCALE GENOMIC DNA]</scope>
    <source>
        <strain>K12 / MG1655 / ATCC 47076</strain>
    </source>
</reference>
<reference key="5">
    <citation type="journal article" date="2006" name="Mol. Syst. Biol.">
        <title>Highly accurate genome sequences of Escherichia coli K-12 strains MG1655 and W3110.</title>
        <authorList>
            <person name="Hayashi K."/>
            <person name="Morooka N."/>
            <person name="Yamamoto Y."/>
            <person name="Fujita K."/>
            <person name="Isono K."/>
            <person name="Choi S."/>
            <person name="Ohtsubo E."/>
            <person name="Baba T."/>
            <person name="Wanner B.L."/>
            <person name="Mori H."/>
            <person name="Horiuchi T."/>
        </authorList>
    </citation>
    <scope>NUCLEOTIDE SEQUENCE [LARGE SCALE GENOMIC DNA]</scope>
    <source>
        <strain>K12 / W3110 / ATCC 27325 / DSM 5911</strain>
    </source>
</reference>
<reference key="6">
    <citation type="journal article" date="1996" name="DNA Res.">
        <title>A 718-kb DNA sequence of the Escherichia coli K-12 genome corresponding to the 12.7-28.0 min region on the linkage map.</title>
        <authorList>
            <person name="Oshima T."/>
            <person name="Aiba H."/>
            <person name="Baba T."/>
            <person name="Fujita K."/>
            <person name="Hayashi K."/>
            <person name="Honjo A."/>
            <person name="Ikemoto K."/>
            <person name="Inada T."/>
            <person name="Itoh T."/>
            <person name="Kajihara M."/>
            <person name="Kanai K."/>
            <person name="Kashimoto K."/>
            <person name="Kimura S."/>
            <person name="Kitagawa M."/>
            <person name="Makino K."/>
            <person name="Masuda S."/>
            <person name="Miki T."/>
            <person name="Mizobuchi K."/>
            <person name="Mori H."/>
            <person name="Motomura K."/>
            <person name="Nakamura Y."/>
            <person name="Nashimoto H."/>
            <person name="Nishio Y."/>
            <person name="Saito N."/>
            <person name="Sampei G."/>
            <person name="Seki Y."/>
            <person name="Tagami H."/>
            <person name="Takemoto K."/>
            <person name="Wada C."/>
            <person name="Yamamoto Y."/>
            <person name="Yano M."/>
            <person name="Horiuchi T."/>
        </authorList>
    </citation>
    <scope>NUCLEOTIDE SEQUENCE [LARGE SCALE GENOMIC DNA] OF 1-16</scope>
    <source>
        <strain>K12 / W3110 / ATCC 27325 / DSM 5911</strain>
    </source>
</reference>
<reference key="7">
    <citation type="journal article" date="1998" name="Electrophoresis">
        <title>Extraction of membrane proteins by differential solubilization for separation using two-dimensional gel electrophoresis.</title>
        <authorList>
            <person name="Molloy M.P."/>
            <person name="Herbert B.R."/>
            <person name="Walsh B.J."/>
            <person name="Tyler M.I."/>
            <person name="Traini M."/>
            <person name="Sanchez J.-C."/>
            <person name="Hochstrasser D.F."/>
            <person name="Williams K.L."/>
            <person name="Gooley A.A."/>
        </authorList>
    </citation>
    <scope>PROTEIN SEQUENCE OF 21-24</scope>
    <source>
        <strain>K12 / W3110 / ATCC 27325 / DSM 5911</strain>
    </source>
</reference>
<reference key="8">
    <citation type="journal article" date="1998" name="J. Bacteriol.">
        <title>Identification of OmpT as the protease that hydrolyzes the antimicrobial peptide protamine before it enters growing cells of Escherichia coli.</title>
        <authorList>
            <person name="Stumpe S."/>
            <person name="Schmid R."/>
            <person name="Stephens D.L."/>
            <person name="Georgiou G."/>
            <person name="Bakker E.P."/>
        </authorList>
    </citation>
    <scope>FUNCTION</scope>
</reference>
<reference key="9">
    <citation type="journal article" date="2000" name="Eur. J. Biochem.">
        <title>In vitro folding, purification and characterization of Escherichia coli outer membrane protease ompT.</title>
        <authorList>
            <person name="Kramer R.A."/>
            <person name="Zandwijken D."/>
            <person name="Egmond M.R."/>
            <person name="Dekker N."/>
        </authorList>
    </citation>
    <scope>CHARACTERIZATION</scope>
    <scope>PROTEIN SEQUENCE OF 21-25</scope>
    <scope>MUTAGENESIS OF GLY-236 AND LYS-237</scope>
    <source>
        <strain>BL21-DE3</strain>
        <strain>K12 / DH5-alpha</strain>
    </source>
</reference>
<reference key="10">
    <citation type="journal article" date="2001" name="FEBS Lett.">
        <title>Identification of essential acidic residues of outer membrane protease OmpT supports a novel active site.</title>
        <authorList>
            <person name="Kramer R.A."/>
            <person name="Vandeputte-Rutten L."/>
            <person name="de Roon G.J."/>
            <person name="Gros P."/>
            <person name="Dekker N."/>
            <person name="Egmond M.R."/>
        </authorList>
    </citation>
    <scope>ACTIVE SITE</scope>
    <scope>MUTAGENESIS OF ASP-103; ASP-105 AND ASP-230</scope>
    <source>
        <strain>BL21-DE3</strain>
        <strain>K12 / DH5-alpha</strain>
    </source>
</reference>
<reference key="11">
    <citation type="journal article" date="2001" name="EMBO J.">
        <title>Crystal structure of the outer membrane protease OmpT from Escherichia coli suggests a novel catalytic site.</title>
        <authorList>
            <person name="Vandeputte-Rutten L."/>
            <person name="Kramer R.A."/>
            <person name="Kroon J."/>
            <person name="Dekker N."/>
            <person name="Egmond M.R."/>
            <person name="Gros P."/>
        </authorList>
    </citation>
    <scope>X-RAY CRYSTALLOGRAPHY (2.6 ANGSTROMS)</scope>
</reference>
<protein>
    <recommendedName>
        <fullName>Protease 7</fullName>
        <ecNumber>3.4.23.49</ecNumber>
    </recommendedName>
    <alternativeName>
        <fullName>Omptin</fullName>
    </alternativeName>
    <alternativeName>
        <fullName>Outer membrane protein 3B</fullName>
    </alternativeName>
    <alternativeName>
        <fullName>Protease A</fullName>
    </alternativeName>
    <alternativeName>
        <fullName>Protease VII</fullName>
    </alternativeName>
</protein>
<evidence type="ECO:0000255" key="1"/>
<evidence type="ECO:0000269" key="2">
    <source>
    </source>
</evidence>
<evidence type="ECO:0000269" key="3">
    <source>
    </source>
</evidence>
<evidence type="ECO:0000269" key="4">
    <source>
    </source>
</evidence>
<evidence type="ECO:0000269" key="5">
    <source>
    </source>
</evidence>
<evidence type="ECO:0000269" key="6">
    <source>
    </source>
</evidence>
<evidence type="ECO:0000269" key="7">
    <source>
    </source>
</evidence>
<evidence type="ECO:0000305" key="8"/>
<evidence type="ECO:0000305" key="9">
    <source>
    </source>
</evidence>
<evidence type="ECO:0007829" key="10">
    <source>
        <dbReference type="PDB" id="1I78"/>
    </source>
</evidence>
<accession>P09169</accession>
<comment type="function">
    <text evidence="7">Protease that can cleave T7 RNA polymerase, ferric enterobactin receptor protein (FEP), antimicrobial peptide protamine and other proteins. This protease has a specificity for paired basic residues.</text>
</comment>
<comment type="catalytic activity">
    <reaction>
        <text>Has a virtual requirement for Arg in the P1 position and a slightly less stringent preference for this residue in the P1' position, which can also contain Lys, Gly or Val.</text>
        <dbReference type="EC" id="3.4.23.49"/>
    </reaction>
</comment>
<comment type="activity regulation">
    <text>Inhibited by zinc.</text>
</comment>
<comment type="subunit">
    <text evidence="8">Homopentamer.</text>
</comment>
<comment type="subcellular location">
    <subcellularLocation>
        <location>Cell outer membrane</location>
        <topology>Multi-pass membrane protein</topology>
    </subcellularLocation>
</comment>
<comment type="miscellaneous">
    <text>Was originally classified as a serine protease, but it seems that OmpT could have a novel catalytic mechanism involving an Asp/His dyad and a pair of Asp.</text>
</comment>
<comment type="miscellaneous">
    <text>Encoded by the cryptic lambdoid prophage DLP12.</text>
</comment>
<comment type="similarity">
    <text evidence="8">Belongs to the peptidase A26 family.</text>
</comment>
<name>OMPT_ECOLI</name>